<keyword id="KW-0963">Cytoplasm</keyword>
<keyword id="KW-0342">GTP-binding</keyword>
<keyword id="KW-0378">Hydrolase</keyword>
<keyword id="KW-0460">Magnesium</keyword>
<keyword id="KW-0479">Metal-binding</keyword>
<keyword id="KW-0547">Nucleotide-binding</keyword>
<keyword id="KW-1185">Reference proteome</keyword>
<reference key="1">
    <citation type="journal article" date="2004" name="Proc. Natl. Acad. Sci. U.S.A.">
        <title>Genomic plasticity of the causative agent of melioidosis, Burkholderia pseudomallei.</title>
        <authorList>
            <person name="Holden M.T.G."/>
            <person name="Titball R.W."/>
            <person name="Peacock S.J."/>
            <person name="Cerdeno-Tarraga A.-M."/>
            <person name="Atkins T."/>
            <person name="Crossman L.C."/>
            <person name="Pitt T."/>
            <person name="Churcher C."/>
            <person name="Mungall K.L."/>
            <person name="Bentley S.D."/>
            <person name="Sebaihia M."/>
            <person name="Thomson N.R."/>
            <person name="Bason N."/>
            <person name="Beacham I.R."/>
            <person name="Brooks K."/>
            <person name="Brown K.A."/>
            <person name="Brown N.F."/>
            <person name="Challis G.L."/>
            <person name="Cherevach I."/>
            <person name="Chillingworth T."/>
            <person name="Cronin A."/>
            <person name="Crossett B."/>
            <person name="Davis P."/>
            <person name="DeShazer D."/>
            <person name="Feltwell T."/>
            <person name="Fraser A."/>
            <person name="Hance Z."/>
            <person name="Hauser H."/>
            <person name="Holroyd S."/>
            <person name="Jagels K."/>
            <person name="Keith K.E."/>
            <person name="Maddison M."/>
            <person name="Moule S."/>
            <person name="Price C."/>
            <person name="Quail M.A."/>
            <person name="Rabbinowitsch E."/>
            <person name="Rutherford K."/>
            <person name="Sanders M."/>
            <person name="Simmonds M."/>
            <person name="Songsivilai S."/>
            <person name="Stevens K."/>
            <person name="Tumapa S."/>
            <person name="Vesaratchavest M."/>
            <person name="Whitehead S."/>
            <person name="Yeats C."/>
            <person name="Barrell B.G."/>
            <person name="Oyston P.C.F."/>
            <person name="Parkhill J."/>
        </authorList>
    </citation>
    <scope>NUCLEOTIDE SEQUENCE [LARGE SCALE GENOMIC DNA]</scope>
    <source>
        <strain>K96243</strain>
    </source>
</reference>
<proteinExistence type="inferred from homology"/>
<gene>
    <name evidence="1" type="primary">obg</name>
    <name type="ordered locus">BPSL3003</name>
</gene>
<evidence type="ECO:0000255" key="1">
    <source>
        <dbReference type="HAMAP-Rule" id="MF_01454"/>
    </source>
</evidence>
<evidence type="ECO:0000255" key="2">
    <source>
        <dbReference type="PROSITE-ProRule" id="PRU01231"/>
    </source>
</evidence>
<evidence type="ECO:0000256" key="3">
    <source>
        <dbReference type="SAM" id="MobiDB-lite"/>
    </source>
</evidence>
<accession>Q63QM0</accession>
<name>OBG_BURPS</name>
<dbReference type="EC" id="3.6.5.-" evidence="1"/>
<dbReference type="EMBL" id="BX571965">
    <property type="protein sequence ID" value="CAH37014.1"/>
    <property type="molecule type" value="Genomic_DNA"/>
</dbReference>
<dbReference type="RefSeq" id="YP_109598.1">
    <property type="nucleotide sequence ID" value="NC_006350.1"/>
</dbReference>
<dbReference type="SMR" id="Q63QM0"/>
<dbReference type="STRING" id="272560.BPSL3003"/>
<dbReference type="KEGG" id="bps:BPSL3003"/>
<dbReference type="PATRIC" id="fig|272560.51.peg.2267"/>
<dbReference type="eggNOG" id="COG0536">
    <property type="taxonomic scope" value="Bacteria"/>
</dbReference>
<dbReference type="Proteomes" id="UP000000605">
    <property type="component" value="Chromosome 1"/>
</dbReference>
<dbReference type="GO" id="GO:0005737">
    <property type="term" value="C:cytoplasm"/>
    <property type="evidence" value="ECO:0007669"/>
    <property type="project" value="UniProtKB-SubCell"/>
</dbReference>
<dbReference type="GO" id="GO:0005525">
    <property type="term" value="F:GTP binding"/>
    <property type="evidence" value="ECO:0007669"/>
    <property type="project" value="UniProtKB-UniRule"/>
</dbReference>
<dbReference type="GO" id="GO:0003924">
    <property type="term" value="F:GTPase activity"/>
    <property type="evidence" value="ECO:0007669"/>
    <property type="project" value="UniProtKB-UniRule"/>
</dbReference>
<dbReference type="GO" id="GO:0000287">
    <property type="term" value="F:magnesium ion binding"/>
    <property type="evidence" value="ECO:0007669"/>
    <property type="project" value="InterPro"/>
</dbReference>
<dbReference type="GO" id="GO:0042254">
    <property type="term" value="P:ribosome biogenesis"/>
    <property type="evidence" value="ECO:0007669"/>
    <property type="project" value="UniProtKB-UniRule"/>
</dbReference>
<dbReference type="CDD" id="cd01898">
    <property type="entry name" value="Obg"/>
    <property type="match status" value="1"/>
</dbReference>
<dbReference type="FunFam" id="2.70.210.12:FF:000001">
    <property type="entry name" value="GTPase Obg"/>
    <property type="match status" value="1"/>
</dbReference>
<dbReference type="Gene3D" id="2.70.210.12">
    <property type="entry name" value="GTP1/OBG domain"/>
    <property type="match status" value="1"/>
</dbReference>
<dbReference type="Gene3D" id="3.40.50.300">
    <property type="entry name" value="P-loop containing nucleotide triphosphate hydrolases"/>
    <property type="match status" value="1"/>
</dbReference>
<dbReference type="HAMAP" id="MF_01454">
    <property type="entry name" value="GTPase_Obg"/>
    <property type="match status" value="1"/>
</dbReference>
<dbReference type="InterPro" id="IPR031167">
    <property type="entry name" value="G_OBG"/>
</dbReference>
<dbReference type="InterPro" id="IPR006073">
    <property type="entry name" value="GTP-bd"/>
</dbReference>
<dbReference type="InterPro" id="IPR014100">
    <property type="entry name" value="GTP-bd_Obg/CgtA"/>
</dbReference>
<dbReference type="InterPro" id="IPR006074">
    <property type="entry name" value="GTP1-OBG_CS"/>
</dbReference>
<dbReference type="InterPro" id="IPR006169">
    <property type="entry name" value="GTP1_OBG_dom"/>
</dbReference>
<dbReference type="InterPro" id="IPR036726">
    <property type="entry name" value="GTP1_OBG_dom_sf"/>
</dbReference>
<dbReference type="InterPro" id="IPR045086">
    <property type="entry name" value="OBG_GTPase"/>
</dbReference>
<dbReference type="InterPro" id="IPR027417">
    <property type="entry name" value="P-loop_NTPase"/>
</dbReference>
<dbReference type="NCBIfam" id="TIGR02729">
    <property type="entry name" value="Obg_CgtA"/>
    <property type="match status" value="1"/>
</dbReference>
<dbReference type="NCBIfam" id="NF008954">
    <property type="entry name" value="PRK12296.1"/>
    <property type="match status" value="1"/>
</dbReference>
<dbReference type="NCBIfam" id="NF008955">
    <property type="entry name" value="PRK12297.1"/>
    <property type="match status" value="1"/>
</dbReference>
<dbReference type="NCBIfam" id="NF008956">
    <property type="entry name" value="PRK12299.1"/>
    <property type="match status" value="1"/>
</dbReference>
<dbReference type="PANTHER" id="PTHR11702">
    <property type="entry name" value="DEVELOPMENTALLY REGULATED GTP-BINDING PROTEIN-RELATED"/>
    <property type="match status" value="1"/>
</dbReference>
<dbReference type="PANTHER" id="PTHR11702:SF31">
    <property type="entry name" value="MITOCHONDRIAL RIBOSOME-ASSOCIATED GTPASE 2"/>
    <property type="match status" value="1"/>
</dbReference>
<dbReference type="Pfam" id="PF01018">
    <property type="entry name" value="GTP1_OBG"/>
    <property type="match status" value="1"/>
</dbReference>
<dbReference type="Pfam" id="PF01926">
    <property type="entry name" value="MMR_HSR1"/>
    <property type="match status" value="1"/>
</dbReference>
<dbReference type="PIRSF" id="PIRSF002401">
    <property type="entry name" value="GTP_bd_Obg/CgtA"/>
    <property type="match status" value="1"/>
</dbReference>
<dbReference type="PRINTS" id="PR00326">
    <property type="entry name" value="GTP1OBG"/>
</dbReference>
<dbReference type="SUPFAM" id="SSF82051">
    <property type="entry name" value="Obg GTP-binding protein N-terminal domain"/>
    <property type="match status" value="1"/>
</dbReference>
<dbReference type="SUPFAM" id="SSF52540">
    <property type="entry name" value="P-loop containing nucleoside triphosphate hydrolases"/>
    <property type="match status" value="1"/>
</dbReference>
<dbReference type="PROSITE" id="PS51710">
    <property type="entry name" value="G_OBG"/>
    <property type="match status" value="1"/>
</dbReference>
<dbReference type="PROSITE" id="PS00905">
    <property type="entry name" value="GTP1_OBG"/>
    <property type="match status" value="1"/>
</dbReference>
<dbReference type="PROSITE" id="PS51883">
    <property type="entry name" value="OBG"/>
    <property type="match status" value="1"/>
</dbReference>
<protein>
    <recommendedName>
        <fullName evidence="1">GTPase Obg</fullName>
        <ecNumber evidence="1">3.6.5.-</ecNumber>
    </recommendedName>
    <alternativeName>
        <fullName evidence="1">GTP-binding protein Obg</fullName>
    </alternativeName>
</protein>
<organism>
    <name type="scientific">Burkholderia pseudomallei (strain K96243)</name>
    <dbReference type="NCBI Taxonomy" id="272560"/>
    <lineage>
        <taxon>Bacteria</taxon>
        <taxon>Pseudomonadati</taxon>
        <taxon>Pseudomonadota</taxon>
        <taxon>Betaproteobacteria</taxon>
        <taxon>Burkholderiales</taxon>
        <taxon>Burkholderiaceae</taxon>
        <taxon>Burkholderia</taxon>
        <taxon>pseudomallei group</taxon>
    </lineage>
</organism>
<sequence>MKFIDEARIEVIAGDGGDGSASMRREKFVPFGGPDGGDGGRGGSVYVIADRNINTLIDYRYAKKHMARNGENGRGSDCYGKGGDDITLRMPVGTVINDMDTGELIADLTEHDQKVLVAKGGAGGLGNLHFKSSTNRAPRQKTDGKPGERRMLKLELKVLADVGLLGMPNAGKSTFISSVSNAKPKIADYPFTTLAPNLGVVRVGPGKSFVIADIPGLIEGAAEGAGLGHQFLRHLQRTGLLLHLVDLAPFDERVDPVAEARAIVGELRKYDESLYEKPRWLVLNKLDMVPEDERRARVADFIERFGWTGPVFEISALTGQGCEGLVYAIHDYLVEHSDAHRAELAEDLASDVRFRDAPGAGGEPHERDAGAH</sequence>
<comment type="function">
    <text evidence="1">An essential GTPase which binds GTP, GDP and possibly (p)ppGpp with moderate affinity, with high nucleotide exchange rates and a fairly low GTP hydrolysis rate. Plays a role in control of the cell cycle, stress response, ribosome biogenesis and in those bacteria that undergo differentiation, in morphogenesis control.</text>
</comment>
<comment type="cofactor">
    <cofactor evidence="1">
        <name>Mg(2+)</name>
        <dbReference type="ChEBI" id="CHEBI:18420"/>
    </cofactor>
</comment>
<comment type="subunit">
    <text evidence="1">Monomer.</text>
</comment>
<comment type="subcellular location">
    <subcellularLocation>
        <location evidence="1">Cytoplasm</location>
    </subcellularLocation>
</comment>
<comment type="similarity">
    <text evidence="1">Belongs to the TRAFAC class OBG-HflX-like GTPase superfamily. OBG GTPase family.</text>
</comment>
<feature type="chain" id="PRO_0000385789" description="GTPase Obg">
    <location>
        <begin position="1"/>
        <end position="372"/>
    </location>
</feature>
<feature type="domain" description="Obg" evidence="2">
    <location>
        <begin position="1"/>
        <end position="159"/>
    </location>
</feature>
<feature type="domain" description="OBG-type G" evidence="1">
    <location>
        <begin position="160"/>
        <end position="334"/>
    </location>
</feature>
<feature type="region of interest" description="Disordered" evidence="3">
    <location>
        <begin position="128"/>
        <end position="147"/>
    </location>
</feature>
<feature type="binding site" evidence="1">
    <location>
        <begin position="166"/>
        <end position="173"/>
    </location>
    <ligand>
        <name>GTP</name>
        <dbReference type="ChEBI" id="CHEBI:37565"/>
    </ligand>
</feature>
<feature type="binding site" evidence="1">
    <location>
        <position position="173"/>
    </location>
    <ligand>
        <name>Mg(2+)</name>
        <dbReference type="ChEBI" id="CHEBI:18420"/>
    </ligand>
</feature>
<feature type="binding site" evidence="1">
    <location>
        <begin position="191"/>
        <end position="195"/>
    </location>
    <ligand>
        <name>GTP</name>
        <dbReference type="ChEBI" id="CHEBI:37565"/>
    </ligand>
</feature>
<feature type="binding site" evidence="1">
    <location>
        <position position="193"/>
    </location>
    <ligand>
        <name>Mg(2+)</name>
        <dbReference type="ChEBI" id="CHEBI:18420"/>
    </ligand>
</feature>
<feature type="binding site" evidence="1">
    <location>
        <begin position="213"/>
        <end position="216"/>
    </location>
    <ligand>
        <name>GTP</name>
        <dbReference type="ChEBI" id="CHEBI:37565"/>
    </ligand>
</feature>
<feature type="binding site" evidence="1">
    <location>
        <begin position="284"/>
        <end position="287"/>
    </location>
    <ligand>
        <name>GTP</name>
        <dbReference type="ChEBI" id="CHEBI:37565"/>
    </ligand>
</feature>
<feature type="binding site" evidence="1">
    <location>
        <begin position="315"/>
        <end position="317"/>
    </location>
    <ligand>
        <name>GTP</name>
        <dbReference type="ChEBI" id="CHEBI:37565"/>
    </ligand>
</feature>